<organism>
    <name type="scientific">Haloarcula marismortui (strain ATCC 43049 / DSM 3752 / JCM 8966 / VKM B-1809)</name>
    <name type="common">Halobacterium marismortui</name>
    <dbReference type="NCBI Taxonomy" id="272569"/>
    <lineage>
        <taxon>Archaea</taxon>
        <taxon>Methanobacteriati</taxon>
        <taxon>Methanobacteriota</taxon>
        <taxon>Stenosarchaea group</taxon>
        <taxon>Halobacteria</taxon>
        <taxon>Halobacteriales</taxon>
        <taxon>Haloarculaceae</taxon>
        <taxon>Haloarcula</taxon>
    </lineage>
</organism>
<gene>
    <name evidence="1" type="primary">hisF</name>
    <name type="ordered locus">rrnAC1394</name>
</gene>
<sequence length="271" mass="28830">MTLTKRIIPCIDVDVDENGDAAVYTGVNFEDLEYTGDPVEMAKAYNESGADEFVFLDITASAEGRETMLDTVSAVADEVFIPLTVGGGIRTRADIKETLRAGADKVSINSGAIAEPDLINEGAAAFGSQCIVISVDARRRFDSEGEHYTEVDGESCWFECTVKGGREGTGLDVIEWATEAEERGAGELFVNSIDADGTKDGYDIPLMKAVCDTVSTPVIASSGCGSPEDMEEVFVDAGADAGLAASIFHFGEYSIAETKEYLDSKGIPVRL</sequence>
<accession>Q5V2C9</accession>
<protein>
    <recommendedName>
        <fullName evidence="1">Imidazole glycerol phosphate synthase subunit HisF</fullName>
        <ecNumber evidence="1">4.3.2.10</ecNumber>
    </recommendedName>
    <alternativeName>
        <fullName evidence="1">IGP synthase cyclase subunit</fullName>
    </alternativeName>
    <alternativeName>
        <fullName evidence="1">IGP synthase subunit HisF</fullName>
    </alternativeName>
    <alternativeName>
        <fullName evidence="1">ImGP synthase subunit HisF</fullName>
        <shortName evidence="1">IGPS subunit HisF</shortName>
    </alternativeName>
</protein>
<proteinExistence type="inferred from homology"/>
<reference key="1">
    <citation type="journal article" date="2004" name="Genome Res.">
        <title>Genome sequence of Haloarcula marismortui: a halophilic archaeon from the Dead Sea.</title>
        <authorList>
            <person name="Baliga N.S."/>
            <person name="Bonneau R."/>
            <person name="Facciotti M.T."/>
            <person name="Pan M."/>
            <person name="Glusman G."/>
            <person name="Deutsch E.W."/>
            <person name="Shannon P."/>
            <person name="Chiu Y."/>
            <person name="Weng R.S."/>
            <person name="Gan R.R."/>
            <person name="Hung P."/>
            <person name="Date S.V."/>
            <person name="Marcotte E."/>
            <person name="Hood L."/>
            <person name="Ng W.V."/>
        </authorList>
    </citation>
    <scope>NUCLEOTIDE SEQUENCE [LARGE SCALE GENOMIC DNA]</scope>
    <source>
        <strain>ATCC 43049 / DSM 3752 / JCM 8966 / VKM B-1809</strain>
    </source>
</reference>
<dbReference type="EC" id="4.3.2.10" evidence="1"/>
<dbReference type="EMBL" id="AY596297">
    <property type="protein sequence ID" value="AAV46323.1"/>
    <property type="molecule type" value="Genomic_DNA"/>
</dbReference>
<dbReference type="RefSeq" id="WP_007187768.1">
    <property type="nucleotide sequence ID" value="NZ_CP039138.1"/>
</dbReference>
<dbReference type="SMR" id="Q5V2C9"/>
<dbReference type="STRING" id="272569.rrnAC1394"/>
<dbReference type="PaxDb" id="272569-rrnAC1394"/>
<dbReference type="EnsemblBacteria" id="AAV46323">
    <property type="protein sequence ID" value="AAV46323"/>
    <property type="gene ID" value="rrnAC1394"/>
</dbReference>
<dbReference type="GeneID" id="40152362"/>
<dbReference type="KEGG" id="hma:rrnAC1394"/>
<dbReference type="PATRIC" id="fig|272569.17.peg.2090"/>
<dbReference type="eggNOG" id="arCOG00617">
    <property type="taxonomic scope" value="Archaea"/>
</dbReference>
<dbReference type="HOGENOM" id="CLU_048577_4_0_2"/>
<dbReference type="UniPathway" id="UPA00031">
    <property type="reaction ID" value="UER00010"/>
</dbReference>
<dbReference type="Proteomes" id="UP000001169">
    <property type="component" value="Chromosome I"/>
</dbReference>
<dbReference type="GO" id="GO:0005737">
    <property type="term" value="C:cytoplasm"/>
    <property type="evidence" value="ECO:0007669"/>
    <property type="project" value="UniProtKB-SubCell"/>
</dbReference>
<dbReference type="GO" id="GO:0000107">
    <property type="term" value="F:imidazoleglycerol-phosphate synthase activity"/>
    <property type="evidence" value="ECO:0007669"/>
    <property type="project" value="UniProtKB-UniRule"/>
</dbReference>
<dbReference type="GO" id="GO:0016829">
    <property type="term" value="F:lyase activity"/>
    <property type="evidence" value="ECO:0007669"/>
    <property type="project" value="UniProtKB-KW"/>
</dbReference>
<dbReference type="GO" id="GO:0000105">
    <property type="term" value="P:L-histidine biosynthetic process"/>
    <property type="evidence" value="ECO:0007669"/>
    <property type="project" value="UniProtKB-UniRule"/>
</dbReference>
<dbReference type="CDD" id="cd04731">
    <property type="entry name" value="HisF"/>
    <property type="match status" value="1"/>
</dbReference>
<dbReference type="Gene3D" id="3.20.20.70">
    <property type="entry name" value="Aldolase class I"/>
    <property type="match status" value="1"/>
</dbReference>
<dbReference type="HAMAP" id="MF_01013">
    <property type="entry name" value="HisF"/>
    <property type="match status" value="1"/>
</dbReference>
<dbReference type="InterPro" id="IPR013785">
    <property type="entry name" value="Aldolase_TIM"/>
</dbReference>
<dbReference type="InterPro" id="IPR006062">
    <property type="entry name" value="His_biosynth"/>
</dbReference>
<dbReference type="InterPro" id="IPR004651">
    <property type="entry name" value="HisF"/>
</dbReference>
<dbReference type="InterPro" id="IPR050064">
    <property type="entry name" value="IGPS_HisA/HisF"/>
</dbReference>
<dbReference type="InterPro" id="IPR011060">
    <property type="entry name" value="RibuloseP-bd_barrel"/>
</dbReference>
<dbReference type="NCBIfam" id="TIGR00735">
    <property type="entry name" value="hisF"/>
    <property type="match status" value="1"/>
</dbReference>
<dbReference type="PANTHER" id="PTHR21235:SF2">
    <property type="entry name" value="IMIDAZOLE GLYCEROL PHOSPHATE SYNTHASE HISHF"/>
    <property type="match status" value="1"/>
</dbReference>
<dbReference type="PANTHER" id="PTHR21235">
    <property type="entry name" value="IMIDAZOLE GLYCEROL PHOSPHATE SYNTHASE SUBUNIT HISF/H IGP SYNTHASE SUBUNIT HISF/H"/>
    <property type="match status" value="1"/>
</dbReference>
<dbReference type="Pfam" id="PF00977">
    <property type="entry name" value="His_biosynth"/>
    <property type="match status" value="1"/>
</dbReference>
<dbReference type="SUPFAM" id="SSF51366">
    <property type="entry name" value="Ribulose-phoshate binding barrel"/>
    <property type="match status" value="1"/>
</dbReference>
<name>HIS6_HALMA</name>
<comment type="function">
    <text evidence="1">IGPS catalyzes the conversion of PRFAR and glutamine to IGP, AICAR and glutamate. The HisF subunit catalyzes the cyclization activity that produces IGP and AICAR from PRFAR using the ammonia provided by the HisH subunit.</text>
</comment>
<comment type="catalytic activity">
    <reaction evidence="1">
        <text>5-[(5-phospho-1-deoxy-D-ribulos-1-ylimino)methylamino]-1-(5-phospho-beta-D-ribosyl)imidazole-4-carboxamide + L-glutamine = D-erythro-1-(imidazol-4-yl)glycerol 3-phosphate + 5-amino-1-(5-phospho-beta-D-ribosyl)imidazole-4-carboxamide + L-glutamate + H(+)</text>
        <dbReference type="Rhea" id="RHEA:24793"/>
        <dbReference type="ChEBI" id="CHEBI:15378"/>
        <dbReference type="ChEBI" id="CHEBI:29985"/>
        <dbReference type="ChEBI" id="CHEBI:58278"/>
        <dbReference type="ChEBI" id="CHEBI:58359"/>
        <dbReference type="ChEBI" id="CHEBI:58475"/>
        <dbReference type="ChEBI" id="CHEBI:58525"/>
        <dbReference type="EC" id="4.3.2.10"/>
    </reaction>
</comment>
<comment type="pathway">
    <text evidence="1">Amino-acid biosynthesis; L-histidine biosynthesis; L-histidine from 5-phospho-alpha-D-ribose 1-diphosphate: step 5/9.</text>
</comment>
<comment type="subunit">
    <text evidence="1">Heterodimer of HisH and HisF.</text>
</comment>
<comment type="subcellular location">
    <subcellularLocation>
        <location evidence="1">Cytoplasm</location>
    </subcellularLocation>
</comment>
<comment type="similarity">
    <text evidence="1">Belongs to the HisA/HisF family.</text>
</comment>
<evidence type="ECO:0000255" key="1">
    <source>
        <dbReference type="HAMAP-Rule" id="MF_01013"/>
    </source>
</evidence>
<keyword id="KW-0028">Amino-acid biosynthesis</keyword>
<keyword id="KW-0963">Cytoplasm</keyword>
<keyword id="KW-0368">Histidine biosynthesis</keyword>
<keyword id="KW-0456">Lyase</keyword>
<keyword id="KW-1185">Reference proteome</keyword>
<feature type="chain" id="PRO_0000142276" description="Imidazole glycerol phosphate synthase subunit HisF">
    <location>
        <begin position="1"/>
        <end position="271"/>
    </location>
</feature>
<feature type="active site" evidence="1">
    <location>
        <position position="12"/>
    </location>
</feature>
<feature type="active site" evidence="1">
    <location>
        <position position="136"/>
    </location>
</feature>